<dbReference type="EC" id="4.1.99.22" evidence="1"/>
<dbReference type="EMBL" id="AE004437">
    <property type="protein sequence ID" value="AAG18718.1"/>
    <property type="status" value="ALT_INIT"/>
    <property type="molecule type" value="Genomic_DNA"/>
</dbReference>
<dbReference type="PIR" id="B84169">
    <property type="entry name" value="B84169"/>
</dbReference>
<dbReference type="RefSeq" id="WP_012289091.1">
    <property type="nucleotide sequence ID" value="NC_002607.1"/>
</dbReference>
<dbReference type="SMR" id="Q9HST4"/>
<dbReference type="FunCoup" id="Q9HST4">
    <property type="interactions" value="101"/>
</dbReference>
<dbReference type="STRING" id="64091.VNG_0085G"/>
<dbReference type="PaxDb" id="64091-VNG_0085G"/>
<dbReference type="GeneID" id="68693067"/>
<dbReference type="KEGG" id="hal:VNG_0085G"/>
<dbReference type="PATRIC" id="fig|64091.14.peg.54"/>
<dbReference type="HOGENOM" id="CLU_009273_0_1_2"/>
<dbReference type="InParanoid" id="Q9HST4"/>
<dbReference type="OrthoDB" id="6925at2157"/>
<dbReference type="PhylomeDB" id="Q9HST4"/>
<dbReference type="UniPathway" id="UPA00344"/>
<dbReference type="Proteomes" id="UP000000554">
    <property type="component" value="Chromosome"/>
</dbReference>
<dbReference type="GO" id="GO:0051539">
    <property type="term" value="F:4 iron, 4 sulfur cluster binding"/>
    <property type="evidence" value="ECO:0007669"/>
    <property type="project" value="UniProtKB-UniRule"/>
</dbReference>
<dbReference type="GO" id="GO:0061799">
    <property type="term" value="F:cyclic pyranopterin monophosphate synthase activity"/>
    <property type="evidence" value="ECO:0000318"/>
    <property type="project" value="GO_Central"/>
</dbReference>
<dbReference type="GO" id="GO:0061798">
    <property type="term" value="F:GTP 3',8'-cyclase activity"/>
    <property type="evidence" value="ECO:0000318"/>
    <property type="project" value="GO_Central"/>
</dbReference>
<dbReference type="GO" id="GO:0005525">
    <property type="term" value="F:GTP binding"/>
    <property type="evidence" value="ECO:0007669"/>
    <property type="project" value="UniProtKB-UniRule"/>
</dbReference>
<dbReference type="GO" id="GO:0046872">
    <property type="term" value="F:metal ion binding"/>
    <property type="evidence" value="ECO:0007669"/>
    <property type="project" value="UniProtKB-KW"/>
</dbReference>
<dbReference type="GO" id="GO:1904047">
    <property type="term" value="F:S-adenosyl-L-methionine binding"/>
    <property type="evidence" value="ECO:0007669"/>
    <property type="project" value="UniProtKB-UniRule"/>
</dbReference>
<dbReference type="GO" id="GO:0006777">
    <property type="term" value="P:Mo-molybdopterin cofactor biosynthetic process"/>
    <property type="evidence" value="ECO:0000318"/>
    <property type="project" value="GO_Central"/>
</dbReference>
<dbReference type="CDD" id="cd01335">
    <property type="entry name" value="Radical_SAM"/>
    <property type="match status" value="1"/>
</dbReference>
<dbReference type="CDD" id="cd21117">
    <property type="entry name" value="Twitch_MoaA"/>
    <property type="match status" value="1"/>
</dbReference>
<dbReference type="Gene3D" id="3.20.20.70">
    <property type="entry name" value="Aldolase class I"/>
    <property type="match status" value="1"/>
</dbReference>
<dbReference type="HAMAP" id="MF_01225_A">
    <property type="entry name" value="MoaA_A"/>
    <property type="match status" value="1"/>
</dbReference>
<dbReference type="InterPro" id="IPR013785">
    <property type="entry name" value="Aldolase_TIM"/>
</dbReference>
<dbReference type="InterPro" id="IPR006638">
    <property type="entry name" value="Elp3/MiaA/NifB-like_rSAM"/>
</dbReference>
<dbReference type="InterPro" id="IPR013485">
    <property type="entry name" value="MoaA_arc"/>
</dbReference>
<dbReference type="InterPro" id="IPR000385">
    <property type="entry name" value="MoaA_NifB_PqqE_Fe-S-bd_CS"/>
</dbReference>
<dbReference type="InterPro" id="IPR010505">
    <property type="entry name" value="MoaA_twitch"/>
</dbReference>
<dbReference type="InterPro" id="IPR050105">
    <property type="entry name" value="MoCo_biosynth_MoaA/MoaC"/>
</dbReference>
<dbReference type="InterPro" id="IPR007197">
    <property type="entry name" value="rSAM"/>
</dbReference>
<dbReference type="NCBIfam" id="TIGR02668">
    <property type="entry name" value="moaA_archaeal"/>
    <property type="match status" value="1"/>
</dbReference>
<dbReference type="NCBIfam" id="NF001199">
    <property type="entry name" value="PRK00164.2-1"/>
    <property type="match status" value="1"/>
</dbReference>
<dbReference type="PANTHER" id="PTHR22960:SF0">
    <property type="entry name" value="MOLYBDENUM COFACTOR BIOSYNTHESIS PROTEIN 1"/>
    <property type="match status" value="1"/>
</dbReference>
<dbReference type="PANTHER" id="PTHR22960">
    <property type="entry name" value="MOLYBDOPTERIN COFACTOR SYNTHESIS PROTEIN A"/>
    <property type="match status" value="1"/>
</dbReference>
<dbReference type="Pfam" id="PF06463">
    <property type="entry name" value="Mob_synth_C"/>
    <property type="match status" value="1"/>
</dbReference>
<dbReference type="Pfam" id="PF04055">
    <property type="entry name" value="Radical_SAM"/>
    <property type="match status" value="1"/>
</dbReference>
<dbReference type="SFLD" id="SFLDG01383">
    <property type="entry name" value="cyclic_pyranopterin_phosphate"/>
    <property type="match status" value="1"/>
</dbReference>
<dbReference type="SFLD" id="SFLDG01072">
    <property type="entry name" value="dehydrogenase_like"/>
    <property type="match status" value="1"/>
</dbReference>
<dbReference type="SMART" id="SM00729">
    <property type="entry name" value="Elp3"/>
    <property type="match status" value="1"/>
</dbReference>
<dbReference type="SUPFAM" id="SSF102114">
    <property type="entry name" value="Radical SAM enzymes"/>
    <property type="match status" value="1"/>
</dbReference>
<dbReference type="PROSITE" id="PS01305">
    <property type="entry name" value="MOAA_NIFB_PQQE"/>
    <property type="match status" value="1"/>
</dbReference>
<dbReference type="PROSITE" id="PS51918">
    <property type="entry name" value="RADICAL_SAM"/>
    <property type="match status" value="1"/>
</dbReference>
<gene>
    <name evidence="1" type="primary">moaA</name>
    <name type="ordered locus">VNG_0085G</name>
</gene>
<protein>
    <recommendedName>
        <fullName evidence="1">Probable GTP 3',8-cyclase</fullName>
        <ecNumber evidence="1">4.1.99.22</ecNumber>
    </recommendedName>
    <alternativeName>
        <fullName evidence="1">Molybdenum cofactor biosynthesis protein A</fullName>
    </alternativeName>
</protein>
<evidence type="ECO:0000255" key="1">
    <source>
        <dbReference type="HAMAP-Rule" id="MF_01225"/>
    </source>
</evidence>
<evidence type="ECO:0000255" key="2">
    <source>
        <dbReference type="PROSITE-ProRule" id="PRU01266"/>
    </source>
</evidence>
<evidence type="ECO:0000256" key="3">
    <source>
        <dbReference type="SAM" id="MobiDB-lite"/>
    </source>
</evidence>
<evidence type="ECO:0000305" key="4"/>
<sequence>MLEDDFGRDVSGVRVSLTDRCNFDCVYCHNEGLGDTRGPIDPRENELSTDRVVRFLSVAHEFGVDAVKLTGGEPMLRSDLEAIIRRTPDDMAVSMTTNGTFLPGRAADLVDAGLERVNISQDAMDNDAFAELTQSGAYDAVLEGVEAALDAGLAPVKLNMVVFEPTAGYVPEMVDHVAARDGLRLQLIEYMPELAGHPEWAIDIDRVHDWLADRADRIETREMHDRRRYWVSSRDAGSTADDAAQSVTPDGGAHPDQGMVEIVDPVGNPQFCANCHRVRLTHDGYLKGCLNRNDDLRGIGETTQSMRAAFRETVANRVPYYGEYMTRTDDGGWEINDDYLDVEGDRDPYEYAADDSA</sequence>
<organism>
    <name type="scientific">Halobacterium salinarum (strain ATCC 700922 / JCM 11081 / NRC-1)</name>
    <name type="common">Halobacterium halobium</name>
    <dbReference type="NCBI Taxonomy" id="64091"/>
    <lineage>
        <taxon>Archaea</taxon>
        <taxon>Methanobacteriati</taxon>
        <taxon>Methanobacteriota</taxon>
        <taxon>Stenosarchaea group</taxon>
        <taxon>Halobacteria</taxon>
        <taxon>Halobacteriales</taxon>
        <taxon>Halobacteriaceae</taxon>
        <taxon>Halobacterium</taxon>
        <taxon>Halobacterium salinarum NRC-34001</taxon>
    </lineage>
</organism>
<comment type="function">
    <text evidence="1">Catalyzes the cyclization of GTP to (8S)-3',8-cyclo-7,8-dihydroguanosine 5'-triphosphate.</text>
</comment>
<comment type="catalytic activity">
    <reaction evidence="1">
        <text>GTP + AH2 + S-adenosyl-L-methionine = (8S)-3',8-cyclo-7,8-dihydroguanosine 5'-triphosphate + 5'-deoxyadenosine + L-methionine + A + H(+)</text>
        <dbReference type="Rhea" id="RHEA:49576"/>
        <dbReference type="ChEBI" id="CHEBI:13193"/>
        <dbReference type="ChEBI" id="CHEBI:15378"/>
        <dbReference type="ChEBI" id="CHEBI:17319"/>
        <dbReference type="ChEBI" id="CHEBI:17499"/>
        <dbReference type="ChEBI" id="CHEBI:37565"/>
        <dbReference type="ChEBI" id="CHEBI:57844"/>
        <dbReference type="ChEBI" id="CHEBI:59789"/>
        <dbReference type="ChEBI" id="CHEBI:131766"/>
        <dbReference type="EC" id="4.1.99.22"/>
    </reaction>
</comment>
<comment type="cofactor">
    <cofactor evidence="1">
        <name>[4Fe-4S] cluster</name>
        <dbReference type="ChEBI" id="CHEBI:49883"/>
    </cofactor>
    <text evidence="1">Binds 2 [4Fe-4S] clusters. Binds 1 [4Fe-4S] cluster coordinated with 3 cysteines and an exchangeable S-adenosyl-L-methionine and 1 [4Fe-4S] cluster coordinated with 3 cysteines and the GTP-derived substrate.</text>
</comment>
<comment type="pathway">
    <text evidence="1">Cofactor biosynthesis; molybdopterin biosynthesis.</text>
</comment>
<comment type="similarity">
    <text evidence="1">Belongs to the radical SAM superfamily. MoaA family.</text>
</comment>
<comment type="sequence caution" evidence="4">
    <conflict type="erroneous initiation">
        <sequence resource="EMBL-CDS" id="AAG18718"/>
    </conflict>
</comment>
<proteinExistence type="inferred from homology"/>
<name>MOAA_HALSA</name>
<reference key="1">
    <citation type="journal article" date="2000" name="Proc. Natl. Acad. Sci. U.S.A.">
        <title>Genome sequence of Halobacterium species NRC-1.</title>
        <authorList>
            <person name="Ng W.V."/>
            <person name="Kennedy S.P."/>
            <person name="Mahairas G.G."/>
            <person name="Berquist B."/>
            <person name="Pan M."/>
            <person name="Shukla H.D."/>
            <person name="Lasky S.R."/>
            <person name="Baliga N.S."/>
            <person name="Thorsson V."/>
            <person name="Sbrogna J."/>
            <person name="Swartzell S."/>
            <person name="Weir D."/>
            <person name="Hall J."/>
            <person name="Dahl T.A."/>
            <person name="Welti R."/>
            <person name="Goo Y.A."/>
            <person name="Leithauser B."/>
            <person name="Keller K."/>
            <person name="Cruz R."/>
            <person name="Danson M.J."/>
            <person name="Hough D.W."/>
            <person name="Maddocks D.G."/>
            <person name="Jablonski P.E."/>
            <person name="Krebs M.P."/>
            <person name="Angevine C.M."/>
            <person name="Dale H."/>
            <person name="Isenbarger T.A."/>
            <person name="Peck R.F."/>
            <person name="Pohlschroder M."/>
            <person name="Spudich J.L."/>
            <person name="Jung K.-H."/>
            <person name="Alam M."/>
            <person name="Freitas T."/>
            <person name="Hou S."/>
            <person name="Daniels C.J."/>
            <person name="Dennis P.P."/>
            <person name="Omer A.D."/>
            <person name="Ebhardt H."/>
            <person name="Lowe T.M."/>
            <person name="Liang P."/>
            <person name="Riley M."/>
            <person name="Hood L."/>
            <person name="DasSarma S."/>
        </authorList>
    </citation>
    <scope>NUCLEOTIDE SEQUENCE [LARGE SCALE GENOMIC DNA]</scope>
    <source>
        <strain>ATCC 700922 / JCM 11081 / NRC-1</strain>
    </source>
</reference>
<keyword id="KW-0004">4Fe-4S</keyword>
<keyword id="KW-0342">GTP-binding</keyword>
<keyword id="KW-0408">Iron</keyword>
<keyword id="KW-0411">Iron-sulfur</keyword>
<keyword id="KW-0456">Lyase</keyword>
<keyword id="KW-0479">Metal-binding</keyword>
<keyword id="KW-0501">Molybdenum cofactor biosynthesis</keyword>
<keyword id="KW-0547">Nucleotide-binding</keyword>
<keyword id="KW-1185">Reference proteome</keyword>
<keyword id="KW-0949">S-adenosyl-L-methionine</keyword>
<accession>Q9HST4</accession>
<feature type="chain" id="PRO_0000153015" description="Probable GTP 3',8-cyclase">
    <location>
        <begin position="1"/>
        <end position="357"/>
    </location>
</feature>
<feature type="domain" description="Radical SAM core" evidence="2">
    <location>
        <begin position="5"/>
        <end position="234"/>
    </location>
</feature>
<feature type="region of interest" description="Disordered" evidence="3">
    <location>
        <begin position="232"/>
        <end position="256"/>
    </location>
</feature>
<feature type="binding site" evidence="1">
    <location>
        <position position="14"/>
    </location>
    <ligand>
        <name>GTP</name>
        <dbReference type="ChEBI" id="CHEBI:37565"/>
    </ligand>
</feature>
<feature type="binding site" evidence="1">
    <location>
        <position position="21"/>
    </location>
    <ligand>
        <name>[4Fe-4S] cluster</name>
        <dbReference type="ChEBI" id="CHEBI:49883"/>
        <label>1</label>
        <note>4Fe-4S-S-AdoMet</note>
    </ligand>
</feature>
<feature type="binding site" evidence="1">
    <location>
        <position position="25"/>
    </location>
    <ligand>
        <name>[4Fe-4S] cluster</name>
        <dbReference type="ChEBI" id="CHEBI:49883"/>
        <label>1</label>
        <note>4Fe-4S-S-AdoMet</note>
    </ligand>
</feature>
<feature type="binding site" evidence="1">
    <location>
        <position position="27"/>
    </location>
    <ligand>
        <name>S-adenosyl-L-methionine</name>
        <dbReference type="ChEBI" id="CHEBI:59789"/>
    </ligand>
</feature>
<feature type="binding site" evidence="1">
    <location>
        <position position="28"/>
    </location>
    <ligand>
        <name>[4Fe-4S] cluster</name>
        <dbReference type="ChEBI" id="CHEBI:49883"/>
        <label>1</label>
        <note>4Fe-4S-S-AdoMet</note>
    </ligand>
</feature>
<feature type="binding site" evidence="1">
    <location>
        <position position="68"/>
    </location>
    <ligand>
        <name>GTP</name>
        <dbReference type="ChEBI" id="CHEBI:37565"/>
    </ligand>
</feature>
<feature type="binding site" evidence="1">
    <location>
        <position position="72"/>
    </location>
    <ligand>
        <name>S-adenosyl-L-methionine</name>
        <dbReference type="ChEBI" id="CHEBI:59789"/>
    </ligand>
</feature>
<feature type="binding site" evidence="1">
    <location>
        <position position="96"/>
    </location>
    <ligand>
        <name>GTP</name>
        <dbReference type="ChEBI" id="CHEBI:37565"/>
    </ligand>
</feature>
<feature type="binding site" evidence="1">
    <location>
        <position position="120"/>
    </location>
    <ligand>
        <name>S-adenosyl-L-methionine</name>
        <dbReference type="ChEBI" id="CHEBI:59789"/>
    </ligand>
</feature>
<feature type="binding site" evidence="1">
    <location>
        <position position="157"/>
    </location>
    <ligand>
        <name>GTP</name>
        <dbReference type="ChEBI" id="CHEBI:37565"/>
    </ligand>
</feature>
<feature type="binding site" evidence="1">
    <location>
        <position position="272"/>
    </location>
    <ligand>
        <name>[4Fe-4S] cluster</name>
        <dbReference type="ChEBI" id="CHEBI:49883"/>
        <label>2</label>
        <note>4Fe-4S-substrate</note>
    </ligand>
</feature>
<feature type="binding site" evidence="1">
    <location>
        <position position="275"/>
    </location>
    <ligand>
        <name>[4Fe-4S] cluster</name>
        <dbReference type="ChEBI" id="CHEBI:49883"/>
        <label>2</label>
        <note>4Fe-4S-substrate</note>
    </ligand>
</feature>
<feature type="binding site" evidence="1">
    <location>
        <begin position="277"/>
        <end position="279"/>
    </location>
    <ligand>
        <name>GTP</name>
        <dbReference type="ChEBI" id="CHEBI:37565"/>
    </ligand>
</feature>
<feature type="binding site" evidence="1">
    <location>
        <position position="289"/>
    </location>
    <ligand>
        <name>[4Fe-4S] cluster</name>
        <dbReference type="ChEBI" id="CHEBI:49883"/>
        <label>2</label>
        <note>4Fe-4S-substrate</note>
    </ligand>
</feature>